<keyword id="KW-0472">Membrane</keyword>
<keyword id="KW-0592">Phosphate transport</keyword>
<keyword id="KW-1185">Reference proteome</keyword>
<keyword id="KW-0769">Symport</keyword>
<keyword id="KW-0812">Transmembrane</keyword>
<keyword id="KW-1133">Transmembrane helix</keyword>
<keyword id="KW-0813">Transport</keyword>
<gene>
    <name type="primary">PHT1-6</name>
    <name type="synonym">PT6</name>
    <name type="ordered locus">Os08g0564000</name>
    <name type="ordered locus">LOC_Os08g45000</name>
    <name type="ORF">P0543D10.41</name>
    <name type="ORF">P0705A05.110</name>
</gene>
<dbReference type="EMBL" id="AF536966">
    <property type="protein sequence ID" value="AAN39047.1"/>
    <property type="molecule type" value="Genomic_DNA"/>
</dbReference>
<dbReference type="EMBL" id="AP004587">
    <property type="protein sequence ID" value="BAD09632.1"/>
    <property type="molecule type" value="Genomic_DNA"/>
</dbReference>
<dbReference type="EMBL" id="AP004623">
    <property type="protein sequence ID" value="BAC55993.1"/>
    <property type="molecule type" value="Genomic_DNA"/>
</dbReference>
<dbReference type="EMBL" id="AP008214">
    <property type="protein sequence ID" value="BAF24441.1"/>
    <property type="molecule type" value="Genomic_DNA"/>
</dbReference>
<dbReference type="EMBL" id="AP014964">
    <property type="protein sequence ID" value="BAT06733.1"/>
    <property type="molecule type" value="Genomic_DNA"/>
</dbReference>
<dbReference type="EMBL" id="AK119787">
    <property type="protein sequence ID" value="BAG99790.1"/>
    <property type="molecule type" value="mRNA"/>
</dbReference>
<dbReference type="RefSeq" id="XP_015649112.1">
    <property type="nucleotide sequence ID" value="XM_015793626.1"/>
</dbReference>
<dbReference type="SMR" id="Q8H6H0"/>
<dbReference type="FunCoup" id="Q8H6H0">
    <property type="interactions" value="338"/>
</dbReference>
<dbReference type="STRING" id="39947.Q8H6H0"/>
<dbReference type="TCDB" id="2.A.1.9.5">
    <property type="family name" value="the major facilitator superfamily (mfs)"/>
</dbReference>
<dbReference type="PaxDb" id="39947-Q8H6H0"/>
<dbReference type="EnsemblPlants" id="Os08t0564000-01">
    <property type="protein sequence ID" value="Os08t0564000-01"/>
    <property type="gene ID" value="Os08g0564000"/>
</dbReference>
<dbReference type="Gramene" id="Os08t0564000-01">
    <property type="protein sequence ID" value="Os08t0564000-01"/>
    <property type="gene ID" value="Os08g0564000"/>
</dbReference>
<dbReference type="KEGG" id="dosa:Os08g0564000"/>
<dbReference type="eggNOG" id="KOG0252">
    <property type="taxonomic scope" value="Eukaryota"/>
</dbReference>
<dbReference type="HOGENOM" id="CLU_001265_46_14_1"/>
<dbReference type="InParanoid" id="Q8H6H0"/>
<dbReference type="OMA" id="LAVPYQH"/>
<dbReference type="OrthoDB" id="433512at2759"/>
<dbReference type="Proteomes" id="UP000000763">
    <property type="component" value="Chromosome 8"/>
</dbReference>
<dbReference type="Proteomes" id="UP000059680">
    <property type="component" value="Chromosome 8"/>
</dbReference>
<dbReference type="GO" id="GO:0016020">
    <property type="term" value="C:membrane"/>
    <property type="evidence" value="ECO:0007669"/>
    <property type="project" value="UniProtKB-SubCell"/>
</dbReference>
<dbReference type="GO" id="GO:0005315">
    <property type="term" value="F:phosphate transmembrane transporter activity"/>
    <property type="evidence" value="ECO:0007669"/>
    <property type="project" value="InterPro"/>
</dbReference>
<dbReference type="GO" id="GO:0015293">
    <property type="term" value="F:symporter activity"/>
    <property type="evidence" value="ECO:0007669"/>
    <property type="project" value="UniProtKB-KW"/>
</dbReference>
<dbReference type="GO" id="GO:0006817">
    <property type="term" value="P:phosphate ion transport"/>
    <property type="evidence" value="ECO:0007669"/>
    <property type="project" value="UniProtKB-KW"/>
</dbReference>
<dbReference type="CDD" id="cd17364">
    <property type="entry name" value="MFS_PhT"/>
    <property type="match status" value="1"/>
</dbReference>
<dbReference type="FunFam" id="1.20.1250.20:FF:000175">
    <property type="entry name" value="Inorganic phosphate transporter 1-6"/>
    <property type="match status" value="1"/>
</dbReference>
<dbReference type="Gene3D" id="1.20.1250.20">
    <property type="entry name" value="MFS general substrate transporter like domains"/>
    <property type="match status" value="1"/>
</dbReference>
<dbReference type="InterPro" id="IPR020846">
    <property type="entry name" value="MFS_dom"/>
</dbReference>
<dbReference type="InterPro" id="IPR005828">
    <property type="entry name" value="MFS_sugar_transport-like"/>
</dbReference>
<dbReference type="InterPro" id="IPR036259">
    <property type="entry name" value="MFS_trans_sf"/>
</dbReference>
<dbReference type="InterPro" id="IPR004738">
    <property type="entry name" value="Phos_permease"/>
</dbReference>
<dbReference type="NCBIfam" id="TIGR00887">
    <property type="entry name" value="2A0109"/>
    <property type="match status" value="1"/>
</dbReference>
<dbReference type="PANTHER" id="PTHR24064">
    <property type="entry name" value="SOLUTE CARRIER FAMILY 22 MEMBER"/>
    <property type="match status" value="1"/>
</dbReference>
<dbReference type="Pfam" id="PF00083">
    <property type="entry name" value="Sugar_tr"/>
    <property type="match status" value="1"/>
</dbReference>
<dbReference type="SUPFAM" id="SSF103473">
    <property type="entry name" value="MFS general substrate transporter"/>
    <property type="match status" value="1"/>
</dbReference>
<dbReference type="PROSITE" id="PS50850">
    <property type="entry name" value="MFS"/>
    <property type="match status" value="1"/>
</dbReference>
<evidence type="ECO:0000255" key="1"/>
<evidence type="ECO:0000256" key="2">
    <source>
        <dbReference type="SAM" id="MobiDB-lite"/>
    </source>
</evidence>
<evidence type="ECO:0000269" key="3">
    <source>
    </source>
</evidence>
<evidence type="ECO:0000269" key="4">
    <source>
    </source>
</evidence>
<evidence type="ECO:0000269" key="5">
    <source>
    </source>
</evidence>
<evidence type="ECO:0000305" key="6"/>
<organism>
    <name type="scientific">Oryza sativa subsp. japonica</name>
    <name type="common">Rice</name>
    <dbReference type="NCBI Taxonomy" id="39947"/>
    <lineage>
        <taxon>Eukaryota</taxon>
        <taxon>Viridiplantae</taxon>
        <taxon>Streptophyta</taxon>
        <taxon>Embryophyta</taxon>
        <taxon>Tracheophyta</taxon>
        <taxon>Spermatophyta</taxon>
        <taxon>Magnoliopsida</taxon>
        <taxon>Liliopsida</taxon>
        <taxon>Poales</taxon>
        <taxon>Poaceae</taxon>
        <taxon>BOP clade</taxon>
        <taxon>Oryzoideae</taxon>
        <taxon>Oryzeae</taxon>
        <taxon>Oryzinae</taxon>
        <taxon>Oryza</taxon>
        <taxon>Oryza sativa</taxon>
    </lineage>
</organism>
<proteinExistence type="evidence at protein level"/>
<name>PHT16_ORYSJ</name>
<sequence length="534" mass="57786">MGGGGGEQQQLEVLHALDVAKTQWYHFTAIVVAGMGFFTDAYDLFCISLVTKLLGRIYYRVDGSPSPGTLPPHVSASVNGVAFVGTLSGQLFFGWLGDKLGRKRVYGITLMLMVLCSLASALSFGHTPTSVMATLCFFRFWLGFGIGGDYPLSATIMSEYANKKTRGAFIAAVFAMQGFGIITGGLVAILVSASFRAAFPAPPYGEDPVASTPPQADFVWRIILMLGALPAALTYYWRTKMPETARYTALVANNAKQAAADMSKVLQVVEMRNIGNNGGSRRPFGLFSGEFVRRHGLHLVGTSATWLLLDIAFYSQNLFQKDIFSAVGWIPKAATMSALEELFRIARAQTLIALCGTVPGYWFTVALIDVVGRFKIQAVGFFMMTLFMLTLALPYHHWTAPGKNHVGFLLLYGLTFFFANFGPNSTTFIVPAEIFPARLRATCHGISAASGKLGAIVGSFGFLYLAQSPDRSKTEHGYPPGIGVRNSLFLLAACNLLGLLFTFLVPESKGKSLEEMSGDAEAQEEAPPPLQTVL</sequence>
<accession>Q8H6H0</accession>
<accession>A0A0P0XIB8</accession>
<feature type="chain" id="PRO_0000365486" description="Inorganic phosphate transporter 1-6">
    <location>
        <begin position="1"/>
        <end position="534"/>
    </location>
</feature>
<feature type="topological domain" description="Cytoplasmic" evidence="1">
    <location>
        <begin position="1"/>
        <end position="29"/>
    </location>
</feature>
<feature type="transmembrane region" description="Helical" evidence="1">
    <location>
        <begin position="30"/>
        <end position="50"/>
    </location>
</feature>
<feature type="topological domain" description="Extracellular" evidence="1">
    <location>
        <begin position="51"/>
        <end position="75"/>
    </location>
</feature>
<feature type="transmembrane region" description="Helical" evidence="1">
    <location>
        <begin position="76"/>
        <end position="96"/>
    </location>
</feature>
<feature type="topological domain" description="Cytoplasmic" evidence="1">
    <location>
        <begin position="97"/>
        <end position="104"/>
    </location>
</feature>
<feature type="transmembrane region" description="Helical" evidence="1">
    <location>
        <begin position="105"/>
        <end position="125"/>
    </location>
</feature>
<feature type="topological domain" description="Extracellular" evidence="1">
    <location>
        <begin position="126"/>
        <end position="127"/>
    </location>
</feature>
<feature type="transmembrane region" description="Helical" evidence="1">
    <location>
        <begin position="128"/>
        <end position="148"/>
    </location>
</feature>
<feature type="topological domain" description="Cytoplasmic" evidence="1">
    <location>
        <begin position="149"/>
        <end position="168"/>
    </location>
</feature>
<feature type="transmembrane region" description="Helical" evidence="1">
    <location>
        <begin position="169"/>
        <end position="189"/>
    </location>
</feature>
<feature type="topological domain" description="Extracellular" evidence="1">
    <location>
        <begin position="190"/>
        <end position="216"/>
    </location>
</feature>
<feature type="transmembrane region" description="Helical" evidence="1">
    <location>
        <begin position="217"/>
        <end position="237"/>
    </location>
</feature>
<feature type="topological domain" description="Cytoplasmic" evidence="1">
    <location>
        <begin position="238"/>
        <end position="294"/>
    </location>
</feature>
<feature type="transmembrane region" description="Helical" evidence="1">
    <location>
        <begin position="295"/>
        <end position="315"/>
    </location>
</feature>
<feature type="topological domain" description="Extracellular" evidence="1">
    <location>
        <begin position="316"/>
        <end position="350"/>
    </location>
</feature>
<feature type="transmembrane region" description="Helical" evidence="1">
    <location>
        <begin position="351"/>
        <end position="371"/>
    </location>
</feature>
<feature type="topological domain" description="Cytoplasmic" evidence="1">
    <location>
        <begin position="372"/>
        <end position="375"/>
    </location>
</feature>
<feature type="transmembrane region" description="Helical" evidence="1">
    <location>
        <begin position="376"/>
        <end position="396"/>
    </location>
</feature>
<feature type="topological domain" description="Extracellular" evidence="1">
    <location>
        <begin position="397"/>
        <end position="405"/>
    </location>
</feature>
<feature type="transmembrane region" description="Helical" evidence="1">
    <location>
        <begin position="406"/>
        <end position="426"/>
    </location>
</feature>
<feature type="topological domain" description="Cytoplasmic" evidence="1">
    <location>
        <begin position="427"/>
        <end position="445"/>
    </location>
</feature>
<feature type="transmembrane region" description="Helical" evidence="1">
    <location>
        <begin position="446"/>
        <end position="466"/>
    </location>
</feature>
<feature type="topological domain" description="Extracellular" evidence="1">
    <location>
        <begin position="467"/>
        <end position="486"/>
    </location>
</feature>
<feature type="transmembrane region" description="Helical" evidence="1">
    <location>
        <begin position="487"/>
        <end position="507"/>
    </location>
</feature>
<feature type="topological domain" description="Cytoplasmic" evidence="1">
    <location>
        <begin position="508"/>
        <end position="534"/>
    </location>
</feature>
<feature type="region of interest" description="Disordered" evidence="2">
    <location>
        <begin position="514"/>
        <end position="534"/>
    </location>
</feature>
<comment type="function">
    <text evidence="5">High-affinity transporter for external inorganic phosphate (Pi). Probably involved in Pi uptake, translocation and internal transport throughout the plant.</text>
</comment>
<comment type="biophysicochemical properties">
    <kinetics>
        <KM evidence="5">97 uM for inorganic phosphate (Pi)</KM>
        <text>Measured in yeast cells deficient in Pi uptake.</text>
    </kinetics>
    <phDependence>
        <text evidence="5">Optimum pH is 6.0.</text>
    </phDependence>
</comment>
<comment type="subcellular location">
    <subcellularLocation>
        <location>Membrane</location>
        <topology>Multi-pass membrane protein</topology>
    </subcellularLocation>
</comment>
<comment type="tissue specificity">
    <text evidence="5">Highly expressed in leaves and at low levels in roots. Expressed in leaf xylem parenchyma cells.</text>
</comment>
<comment type="induction">
    <text evidence="3 4 5">In roots and leaves by phosphate starvation. Down-regulated in roots when colonized by the mycorrhizal fungus G.intraradices. Down-regulated by high phosphate in suspension cell culture.</text>
</comment>
<comment type="miscellaneous">
    <text>Although related to the sugar transporter family, it does not transport sugars.</text>
</comment>
<comment type="similarity">
    <text evidence="6">Belongs to the major facilitator superfamily. Phosphate:H(+) symporter (TC 2.A.1.9) family.</text>
</comment>
<reference key="1">
    <citation type="journal article" date="2002" name="Proc. Natl. Acad. Sci. U.S.A.">
        <title>Rice phosphate transporters include an evolutionarily divergent gene specifically activated in arbuscular mycorrhizal symbiosis.</title>
        <authorList>
            <person name="Paszkowski U."/>
            <person name="Kroken S."/>
            <person name="Roux C."/>
            <person name="Briggs S.P."/>
        </authorList>
    </citation>
    <scope>NUCLEOTIDE SEQUENCE [GENOMIC DNA]</scope>
    <scope>INDUCTION</scope>
</reference>
<reference key="2">
    <citation type="journal article" date="2005" name="Nature">
        <title>The map-based sequence of the rice genome.</title>
        <authorList>
            <consortium name="International rice genome sequencing project (IRGSP)"/>
        </authorList>
    </citation>
    <scope>NUCLEOTIDE SEQUENCE [LARGE SCALE GENOMIC DNA]</scope>
    <source>
        <strain>cv. Nipponbare</strain>
    </source>
</reference>
<reference key="3">
    <citation type="journal article" date="2008" name="Nucleic Acids Res.">
        <title>The rice annotation project database (RAP-DB): 2008 update.</title>
        <authorList>
            <consortium name="The rice annotation project (RAP)"/>
        </authorList>
    </citation>
    <scope>GENOME REANNOTATION</scope>
    <source>
        <strain>cv. Nipponbare</strain>
    </source>
</reference>
<reference key="4">
    <citation type="journal article" date="2013" name="Rice">
        <title>Improvement of the Oryza sativa Nipponbare reference genome using next generation sequence and optical map data.</title>
        <authorList>
            <person name="Kawahara Y."/>
            <person name="de la Bastide M."/>
            <person name="Hamilton J.P."/>
            <person name="Kanamori H."/>
            <person name="McCombie W.R."/>
            <person name="Ouyang S."/>
            <person name="Schwartz D.C."/>
            <person name="Tanaka T."/>
            <person name="Wu J."/>
            <person name="Zhou S."/>
            <person name="Childs K.L."/>
            <person name="Davidson R.M."/>
            <person name="Lin H."/>
            <person name="Quesada-Ocampo L."/>
            <person name="Vaillancourt B."/>
            <person name="Sakai H."/>
            <person name="Lee S.S."/>
            <person name="Kim J."/>
            <person name="Numa H."/>
            <person name="Itoh T."/>
            <person name="Buell C.R."/>
            <person name="Matsumoto T."/>
        </authorList>
    </citation>
    <scope>GENOME REANNOTATION</scope>
    <source>
        <strain>cv. Nipponbare</strain>
    </source>
</reference>
<reference key="5">
    <citation type="journal article" date="2003" name="Science">
        <title>Collection, mapping, and annotation of over 28,000 cDNA clones from japonica rice.</title>
        <authorList>
            <consortium name="The rice full-length cDNA consortium"/>
        </authorList>
    </citation>
    <scope>NUCLEOTIDE SEQUENCE [LARGE SCALE MRNA]</scope>
    <source>
        <strain>cv. Nipponbare</strain>
    </source>
</reference>
<reference key="6">
    <citation type="journal article" date="2008" name="Biotechnol. Lett.">
        <title>Increased expression of OsPT1, a high-affinity phosphate transporter, enhances phosphate acquisition in rice.</title>
        <authorList>
            <person name="Seo H.-M."/>
            <person name="Jung Y."/>
            <person name="Song S."/>
            <person name="Kim Y."/>
            <person name="Kwon T."/>
            <person name="Kim D.-H."/>
            <person name="Jeung S.-J."/>
            <person name="Yi Y.-B."/>
            <person name="Yi G."/>
            <person name="Nam M.-H."/>
            <person name="Nam J."/>
        </authorList>
    </citation>
    <scope>INDUCTION</scope>
</reference>
<reference key="7">
    <citation type="journal article" date="2009" name="Plant J.">
        <title>Two rice phosphate transporters, OsPht1;2 and OsPht1;6, have different functions and kinetic properties in uptake and translocation.</title>
        <authorList>
            <person name="Ai P."/>
            <person name="Sun S."/>
            <person name="Zhao J."/>
            <person name="Fan X."/>
            <person name="Xin W."/>
            <person name="Guo Q."/>
            <person name="Yu L."/>
            <person name="Shen Q."/>
            <person name="Wu P."/>
            <person name="Miller A.J."/>
            <person name="Xu G."/>
        </authorList>
    </citation>
    <scope>FUNCTION</scope>
    <scope>BIOPHYSICOCHEMICAL PROPERTIES</scope>
    <scope>TISSUE SPECIFICITY</scope>
    <scope>INDUCTION</scope>
</reference>
<protein>
    <recommendedName>
        <fullName>Inorganic phosphate transporter 1-6</fullName>
        <shortName>OsPT6</shortName>
        <shortName>OsPht1;6</shortName>
    </recommendedName>
    <alternativeName>
        <fullName>H(+)/Pi cotransporter</fullName>
    </alternativeName>
    <alternativeName>
        <fullName>OsLPT1</fullName>
    </alternativeName>
    <alternativeName>
        <fullName>OsLPT6:1</fullName>
    </alternativeName>
</protein>